<name>PTH_CHLTE</name>
<accession>Q8KD05</accession>
<dbReference type="EC" id="3.1.1.29" evidence="1"/>
<dbReference type="EMBL" id="AE006470">
    <property type="protein sequence ID" value="AAM72482.1"/>
    <property type="molecule type" value="Genomic_DNA"/>
</dbReference>
<dbReference type="RefSeq" id="NP_662140.1">
    <property type="nucleotide sequence ID" value="NC_002932.3"/>
</dbReference>
<dbReference type="RefSeq" id="WP_010932921.1">
    <property type="nucleotide sequence ID" value="NC_002932.3"/>
</dbReference>
<dbReference type="SMR" id="Q8KD05"/>
<dbReference type="STRING" id="194439.CT1252"/>
<dbReference type="EnsemblBacteria" id="AAM72482">
    <property type="protein sequence ID" value="AAM72482"/>
    <property type="gene ID" value="CT1252"/>
</dbReference>
<dbReference type="KEGG" id="cte:CT1252"/>
<dbReference type="PATRIC" id="fig|194439.7.peg.1141"/>
<dbReference type="eggNOG" id="COG0193">
    <property type="taxonomic scope" value="Bacteria"/>
</dbReference>
<dbReference type="HOGENOM" id="CLU_062456_4_1_10"/>
<dbReference type="OrthoDB" id="9800507at2"/>
<dbReference type="Proteomes" id="UP000001007">
    <property type="component" value="Chromosome"/>
</dbReference>
<dbReference type="GO" id="GO:0005737">
    <property type="term" value="C:cytoplasm"/>
    <property type="evidence" value="ECO:0007669"/>
    <property type="project" value="UniProtKB-SubCell"/>
</dbReference>
<dbReference type="GO" id="GO:0004045">
    <property type="term" value="F:peptidyl-tRNA hydrolase activity"/>
    <property type="evidence" value="ECO:0007669"/>
    <property type="project" value="UniProtKB-UniRule"/>
</dbReference>
<dbReference type="GO" id="GO:0000049">
    <property type="term" value="F:tRNA binding"/>
    <property type="evidence" value="ECO:0007669"/>
    <property type="project" value="UniProtKB-UniRule"/>
</dbReference>
<dbReference type="GO" id="GO:0006515">
    <property type="term" value="P:protein quality control for misfolded or incompletely synthesized proteins"/>
    <property type="evidence" value="ECO:0007669"/>
    <property type="project" value="UniProtKB-UniRule"/>
</dbReference>
<dbReference type="GO" id="GO:0072344">
    <property type="term" value="P:rescue of stalled ribosome"/>
    <property type="evidence" value="ECO:0007669"/>
    <property type="project" value="UniProtKB-UniRule"/>
</dbReference>
<dbReference type="CDD" id="cd00462">
    <property type="entry name" value="PTH"/>
    <property type="match status" value="1"/>
</dbReference>
<dbReference type="FunFam" id="3.40.50.1470:FF:000001">
    <property type="entry name" value="Peptidyl-tRNA hydrolase"/>
    <property type="match status" value="1"/>
</dbReference>
<dbReference type="Gene3D" id="3.40.50.1470">
    <property type="entry name" value="Peptidyl-tRNA hydrolase"/>
    <property type="match status" value="1"/>
</dbReference>
<dbReference type="HAMAP" id="MF_00083">
    <property type="entry name" value="Pept_tRNA_hydro_bact"/>
    <property type="match status" value="1"/>
</dbReference>
<dbReference type="InterPro" id="IPR001328">
    <property type="entry name" value="Pept_tRNA_hydro"/>
</dbReference>
<dbReference type="InterPro" id="IPR018171">
    <property type="entry name" value="Pept_tRNA_hydro_CS"/>
</dbReference>
<dbReference type="InterPro" id="IPR036416">
    <property type="entry name" value="Pept_tRNA_hydro_sf"/>
</dbReference>
<dbReference type="NCBIfam" id="TIGR00447">
    <property type="entry name" value="pth"/>
    <property type="match status" value="1"/>
</dbReference>
<dbReference type="PANTHER" id="PTHR17224">
    <property type="entry name" value="PEPTIDYL-TRNA HYDROLASE"/>
    <property type="match status" value="1"/>
</dbReference>
<dbReference type="PANTHER" id="PTHR17224:SF1">
    <property type="entry name" value="PEPTIDYL-TRNA HYDROLASE"/>
    <property type="match status" value="1"/>
</dbReference>
<dbReference type="Pfam" id="PF01195">
    <property type="entry name" value="Pept_tRNA_hydro"/>
    <property type="match status" value="1"/>
</dbReference>
<dbReference type="SUPFAM" id="SSF53178">
    <property type="entry name" value="Peptidyl-tRNA hydrolase-like"/>
    <property type="match status" value="1"/>
</dbReference>
<dbReference type="PROSITE" id="PS01195">
    <property type="entry name" value="PEPT_TRNA_HYDROL_1"/>
    <property type="match status" value="1"/>
</dbReference>
<organism>
    <name type="scientific">Chlorobaculum tepidum (strain ATCC 49652 / DSM 12025 / NBRC 103806 / TLS)</name>
    <name type="common">Chlorobium tepidum</name>
    <dbReference type="NCBI Taxonomy" id="194439"/>
    <lineage>
        <taxon>Bacteria</taxon>
        <taxon>Pseudomonadati</taxon>
        <taxon>Chlorobiota</taxon>
        <taxon>Chlorobiia</taxon>
        <taxon>Chlorobiales</taxon>
        <taxon>Chlorobiaceae</taxon>
        <taxon>Chlorobaculum</taxon>
    </lineage>
</organism>
<sequence>MKLIVGLGNPELRHAATRHNIGFDVIDHLAGSSTFSSGKGNYRFTKITAPGGPLILVKPMTYMNLSGHAVVAAMNFWKIERENLLVICDDVNIPLGTIRIRAKGSAGGQNGLKHIIQSLGSEEFARLRVGVGGENMPASLSSFVLSKFTAEERKCIDKVIPVCADAVLDFASLGVEHAMTKYNGQVC</sequence>
<gene>
    <name evidence="1" type="primary">pth</name>
    <name type="ordered locus">CT1252</name>
</gene>
<evidence type="ECO:0000255" key="1">
    <source>
        <dbReference type="HAMAP-Rule" id="MF_00083"/>
    </source>
</evidence>
<comment type="function">
    <text evidence="1">Hydrolyzes ribosome-free peptidyl-tRNAs (with 1 or more amino acids incorporated), which drop off the ribosome during protein synthesis, or as a result of ribosome stalling.</text>
</comment>
<comment type="function">
    <text evidence="1">Catalyzes the release of premature peptidyl moieties from peptidyl-tRNA molecules trapped in stalled 50S ribosomal subunits, and thus maintains levels of free tRNAs and 50S ribosomes.</text>
</comment>
<comment type="catalytic activity">
    <reaction evidence="1">
        <text>an N-acyl-L-alpha-aminoacyl-tRNA + H2O = an N-acyl-L-amino acid + a tRNA + H(+)</text>
        <dbReference type="Rhea" id="RHEA:54448"/>
        <dbReference type="Rhea" id="RHEA-COMP:10123"/>
        <dbReference type="Rhea" id="RHEA-COMP:13883"/>
        <dbReference type="ChEBI" id="CHEBI:15377"/>
        <dbReference type="ChEBI" id="CHEBI:15378"/>
        <dbReference type="ChEBI" id="CHEBI:59874"/>
        <dbReference type="ChEBI" id="CHEBI:78442"/>
        <dbReference type="ChEBI" id="CHEBI:138191"/>
        <dbReference type="EC" id="3.1.1.29"/>
    </reaction>
</comment>
<comment type="subunit">
    <text evidence="1">Monomer.</text>
</comment>
<comment type="subcellular location">
    <subcellularLocation>
        <location evidence="1">Cytoplasm</location>
    </subcellularLocation>
</comment>
<comment type="similarity">
    <text evidence="1">Belongs to the PTH family.</text>
</comment>
<feature type="chain" id="PRO_0000187719" description="Peptidyl-tRNA hydrolase">
    <location>
        <begin position="1"/>
        <end position="187"/>
    </location>
</feature>
<feature type="active site" description="Proton acceptor" evidence="1">
    <location>
        <position position="19"/>
    </location>
</feature>
<feature type="binding site" evidence="1">
    <location>
        <position position="14"/>
    </location>
    <ligand>
        <name>tRNA</name>
        <dbReference type="ChEBI" id="CHEBI:17843"/>
    </ligand>
</feature>
<feature type="binding site" evidence="1">
    <location>
        <position position="62"/>
    </location>
    <ligand>
        <name>tRNA</name>
        <dbReference type="ChEBI" id="CHEBI:17843"/>
    </ligand>
</feature>
<feature type="binding site" evidence="1">
    <location>
        <position position="64"/>
    </location>
    <ligand>
        <name>tRNA</name>
        <dbReference type="ChEBI" id="CHEBI:17843"/>
    </ligand>
</feature>
<feature type="binding site" evidence="1">
    <location>
        <position position="110"/>
    </location>
    <ligand>
        <name>tRNA</name>
        <dbReference type="ChEBI" id="CHEBI:17843"/>
    </ligand>
</feature>
<feature type="site" description="Discriminates between blocked and unblocked aminoacyl-tRNA" evidence="1">
    <location>
        <position position="9"/>
    </location>
</feature>
<feature type="site" description="Stabilizes the basic form of H active site to accept a proton" evidence="1">
    <location>
        <position position="89"/>
    </location>
</feature>
<proteinExistence type="inferred from homology"/>
<protein>
    <recommendedName>
        <fullName evidence="1">Peptidyl-tRNA hydrolase</fullName>
        <shortName evidence="1">Pth</shortName>
        <ecNumber evidence="1">3.1.1.29</ecNumber>
    </recommendedName>
</protein>
<reference key="1">
    <citation type="journal article" date="2002" name="Proc. Natl. Acad. Sci. U.S.A.">
        <title>The complete genome sequence of Chlorobium tepidum TLS, a photosynthetic, anaerobic, green-sulfur bacterium.</title>
        <authorList>
            <person name="Eisen J.A."/>
            <person name="Nelson K.E."/>
            <person name="Paulsen I.T."/>
            <person name="Heidelberg J.F."/>
            <person name="Wu M."/>
            <person name="Dodson R.J."/>
            <person name="DeBoy R.T."/>
            <person name="Gwinn M.L."/>
            <person name="Nelson W.C."/>
            <person name="Haft D.H."/>
            <person name="Hickey E.K."/>
            <person name="Peterson J.D."/>
            <person name="Durkin A.S."/>
            <person name="Kolonay J.F."/>
            <person name="Yang F."/>
            <person name="Holt I.E."/>
            <person name="Umayam L.A."/>
            <person name="Mason T.M."/>
            <person name="Brenner M."/>
            <person name="Shea T.P."/>
            <person name="Parksey D.S."/>
            <person name="Nierman W.C."/>
            <person name="Feldblyum T.V."/>
            <person name="Hansen C.L."/>
            <person name="Craven M.B."/>
            <person name="Radune D."/>
            <person name="Vamathevan J.J."/>
            <person name="Khouri H.M."/>
            <person name="White O."/>
            <person name="Gruber T.M."/>
            <person name="Ketchum K.A."/>
            <person name="Venter J.C."/>
            <person name="Tettelin H."/>
            <person name="Bryant D.A."/>
            <person name="Fraser C.M."/>
        </authorList>
    </citation>
    <scope>NUCLEOTIDE SEQUENCE [LARGE SCALE GENOMIC DNA]</scope>
    <source>
        <strain>ATCC 49652 / DSM 12025 / NBRC 103806 / TLS</strain>
    </source>
</reference>
<keyword id="KW-0963">Cytoplasm</keyword>
<keyword id="KW-0378">Hydrolase</keyword>
<keyword id="KW-1185">Reference proteome</keyword>
<keyword id="KW-0694">RNA-binding</keyword>
<keyword id="KW-0820">tRNA-binding</keyword>